<reference key="1">
    <citation type="journal article" date="2011" name="Stand. Genomic Sci.">
        <title>Complete genome sequence of Parvibaculum lavamentivorans type strain (DS-1(T)).</title>
        <authorList>
            <person name="Schleheck D."/>
            <person name="Weiss M."/>
            <person name="Pitluck S."/>
            <person name="Bruce D."/>
            <person name="Land M.L."/>
            <person name="Han S."/>
            <person name="Saunders E."/>
            <person name="Tapia R."/>
            <person name="Detter C."/>
            <person name="Brettin T."/>
            <person name="Han J."/>
            <person name="Woyke T."/>
            <person name="Goodwin L."/>
            <person name="Pennacchio L."/>
            <person name="Nolan M."/>
            <person name="Cook A.M."/>
            <person name="Kjelleberg S."/>
            <person name="Thomas T."/>
        </authorList>
    </citation>
    <scope>NUCLEOTIDE SEQUENCE [LARGE SCALE GENOMIC DNA]</scope>
    <source>
        <strain>DS-1 / DSM 13023 / NCIMB 13966</strain>
    </source>
</reference>
<dbReference type="EC" id="3.4.21.88" evidence="1"/>
<dbReference type="EMBL" id="CP000774">
    <property type="protein sequence ID" value="ABS64784.1"/>
    <property type="molecule type" value="Genomic_DNA"/>
</dbReference>
<dbReference type="RefSeq" id="WP_012112110.1">
    <property type="nucleotide sequence ID" value="NC_009719.1"/>
</dbReference>
<dbReference type="SMR" id="A7HY01"/>
<dbReference type="STRING" id="402881.Plav_3178"/>
<dbReference type="MEROPS" id="S24.001"/>
<dbReference type="KEGG" id="pla:Plav_3178"/>
<dbReference type="eggNOG" id="COG1974">
    <property type="taxonomic scope" value="Bacteria"/>
</dbReference>
<dbReference type="HOGENOM" id="CLU_066192_45_2_5"/>
<dbReference type="OrthoDB" id="9802364at2"/>
<dbReference type="Proteomes" id="UP000006377">
    <property type="component" value="Chromosome"/>
</dbReference>
<dbReference type="GO" id="GO:0003677">
    <property type="term" value="F:DNA binding"/>
    <property type="evidence" value="ECO:0007669"/>
    <property type="project" value="UniProtKB-UniRule"/>
</dbReference>
<dbReference type="GO" id="GO:0004252">
    <property type="term" value="F:serine-type endopeptidase activity"/>
    <property type="evidence" value="ECO:0007669"/>
    <property type="project" value="UniProtKB-UniRule"/>
</dbReference>
<dbReference type="GO" id="GO:0006281">
    <property type="term" value="P:DNA repair"/>
    <property type="evidence" value="ECO:0007669"/>
    <property type="project" value="UniProtKB-UniRule"/>
</dbReference>
<dbReference type="GO" id="GO:0006260">
    <property type="term" value="P:DNA replication"/>
    <property type="evidence" value="ECO:0007669"/>
    <property type="project" value="UniProtKB-UniRule"/>
</dbReference>
<dbReference type="GO" id="GO:0045892">
    <property type="term" value="P:negative regulation of DNA-templated transcription"/>
    <property type="evidence" value="ECO:0007669"/>
    <property type="project" value="UniProtKB-UniRule"/>
</dbReference>
<dbReference type="GO" id="GO:0006508">
    <property type="term" value="P:proteolysis"/>
    <property type="evidence" value="ECO:0007669"/>
    <property type="project" value="InterPro"/>
</dbReference>
<dbReference type="GO" id="GO:0009432">
    <property type="term" value="P:SOS response"/>
    <property type="evidence" value="ECO:0007669"/>
    <property type="project" value="UniProtKB-UniRule"/>
</dbReference>
<dbReference type="CDD" id="cd06529">
    <property type="entry name" value="S24_LexA-like"/>
    <property type="match status" value="1"/>
</dbReference>
<dbReference type="FunFam" id="1.10.10.10:FF:000102">
    <property type="entry name" value="LexA repressor"/>
    <property type="match status" value="1"/>
</dbReference>
<dbReference type="FunFam" id="2.10.109.10:FF:000001">
    <property type="entry name" value="LexA repressor"/>
    <property type="match status" value="1"/>
</dbReference>
<dbReference type="Gene3D" id="2.10.109.10">
    <property type="entry name" value="Umud Fragment, subunit A"/>
    <property type="match status" value="1"/>
</dbReference>
<dbReference type="Gene3D" id="1.10.10.10">
    <property type="entry name" value="Winged helix-like DNA-binding domain superfamily/Winged helix DNA-binding domain"/>
    <property type="match status" value="1"/>
</dbReference>
<dbReference type="HAMAP" id="MF_00015">
    <property type="entry name" value="LexA"/>
    <property type="match status" value="1"/>
</dbReference>
<dbReference type="InterPro" id="IPR006200">
    <property type="entry name" value="LexA"/>
</dbReference>
<dbReference type="InterPro" id="IPR039418">
    <property type="entry name" value="LexA-like"/>
</dbReference>
<dbReference type="InterPro" id="IPR036286">
    <property type="entry name" value="LexA/Signal_pep-like_sf"/>
</dbReference>
<dbReference type="InterPro" id="IPR006199">
    <property type="entry name" value="LexA_DNA-bd_dom"/>
</dbReference>
<dbReference type="InterPro" id="IPR050077">
    <property type="entry name" value="LexA_repressor"/>
</dbReference>
<dbReference type="InterPro" id="IPR006197">
    <property type="entry name" value="Peptidase_S24_LexA"/>
</dbReference>
<dbReference type="InterPro" id="IPR015927">
    <property type="entry name" value="Peptidase_S24_S26A/B/C"/>
</dbReference>
<dbReference type="InterPro" id="IPR036388">
    <property type="entry name" value="WH-like_DNA-bd_sf"/>
</dbReference>
<dbReference type="InterPro" id="IPR036390">
    <property type="entry name" value="WH_DNA-bd_sf"/>
</dbReference>
<dbReference type="NCBIfam" id="TIGR00498">
    <property type="entry name" value="lexA"/>
    <property type="match status" value="1"/>
</dbReference>
<dbReference type="PANTHER" id="PTHR33516">
    <property type="entry name" value="LEXA REPRESSOR"/>
    <property type="match status" value="1"/>
</dbReference>
<dbReference type="PANTHER" id="PTHR33516:SF2">
    <property type="entry name" value="LEXA REPRESSOR-RELATED"/>
    <property type="match status" value="1"/>
</dbReference>
<dbReference type="Pfam" id="PF01726">
    <property type="entry name" value="LexA_DNA_bind"/>
    <property type="match status" value="1"/>
</dbReference>
<dbReference type="Pfam" id="PF00717">
    <property type="entry name" value="Peptidase_S24"/>
    <property type="match status" value="1"/>
</dbReference>
<dbReference type="PRINTS" id="PR00726">
    <property type="entry name" value="LEXASERPTASE"/>
</dbReference>
<dbReference type="SUPFAM" id="SSF51306">
    <property type="entry name" value="LexA/Signal peptidase"/>
    <property type="match status" value="1"/>
</dbReference>
<dbReference type="SUPFAM" id="SSF46785">
    <property type="entry name" value="Winged helix' DNA-binding domain"/>
    <property type="match status" value="1"/>
</dbReference>
<feature type="chain" id="PRO_1000070966" description="LexA repressor">
    <location>
        <begin position="1"/>
        <end position="237"/>
    </location>
</feature>
<feature type="DNA-binding region" description="H-T-H motif" evidence="1">
    <location>
        <begin position="26"/>
        <end position="46"/>
    </location>
</feature>
<feature type="region of interest" description="Disordered" evidence="2">
    <location>
        <begin position="84"/>
        <end position="110"/>
    </location>
</feature>
<feature type="active site" description="For autocatalytic cleavage activity" evidence="1">
    <location>
        <position position="158"/>
    </location>
</feature>
<feature type="active site" description="For autocatalytic cleavage activity" evidence="1">
    <location>
        <position position="196"/>
    </location>
</feature>
<feature type="site" description="Cleavage; by autolysis" evidence="1">
    <location>
        <begin position="123"/>
        <end position="124"/>
    </location>
</feature>
<organism>
    <name type="scientific">Parvibaculum lavamentivorans (strain DS-1 / DSM 13023 / NCIMB 13966)</name>
    <dbReference type="NCBI Taxonomy" id="402881"/>
    <lineage>
        <taxon>Bacteria</taxon>
        <taxon>Pseudomonadati</taxon>
        <taxon>Pseudomonadota</taxon>
        <taxon>Alphaproteobacteria</taxon>
        <taxon>Hyphomicrobiales</taxon>
        <taxon>Parvibaculaceae</taxon>
        <taxon>Parvibaculum</taxon>
    </lineage>
</organism>
<accession>A7HY01</accession>
<proteinExistence type="inferred from homology"/>
<comment type="function">
    <text evidence="1">Represses a number of genes involved in the response to DNA damage (SOS response), including recA and lexA. In the presence of single-stranded DNA, RecA interacts with LexA causing an autocatalytic cleavage which disrupts the DNA-binding part of LexA, leading to derepression of the SOS regulon and eventually DNA repair.</text>
</comment>
<comment type="catalytic activity">
    <reaction evidence="1">
        <text>Hydrolysis of Ala-|-Gly bond in repressor LexA.</text>
        <dbReference type="EC" id="3.4.21.88"/>
    </reaction>
</comment>
<comment type="subunit">
    <text evidence="1">Homodimer.</text>
</comment>
<comment type="similarity">
    <text evidence="1">Belongs to the peptidase S24 family.</text>
</comment>
<evidence type="ECO:0000255" key="1">
    <source>
        <dbReference type="HAMAP-Rule" id="MF_00015"/>
    </source>
</evidence>
<evidence type="ECO:0000256" key="2">
    <source>
        <dbReference type="SAM" id="MobiDB-lite"/>
    </source>
</evidence>
<sequence>MLTRKQHELLMFIHERIKEGGVSPSFDEMKEALDLRSKSGIHRLITALEERGFIRRLPHRARALEILKLPDAASPSLAMARGRGFSPSVIEGGAQPKPSSRDLAPARSSGDTMTLSVMGRIAAGTPIEALQEESHQVSVPLNLLGSGEHYALEVKGDSMIEAGILDGDTVLIQRCDTATSGDIVVALVDGYEATLKRLRKKGDSIALEAANPAYETRIFGPDRVKVQGKLVGLLRRY</sequence>
<protein>
    <recommendedName>
        <fullName evidence="1">LexA repressor</fullName>
        <ecNumber evidence="1">3.4.21.88</ecNumber>
    </recommendedName>
</protein>
<name>LEXA_PARL1</name>
<keyword id="KW-0068">Autocatalytic cleavage</keyword>
<keyword id="KW-0227">DNA damage</keyword>
<keyword id="KW-0234">DNA repair</keyword>
<keyword id="KW-0235">DNA replication</keyword>
<keyword id="KW-0238">DNA-binding</keyword>
<keyword id="KW-0378">Hydrolase</keyword>
<keyword id="KW-1185">Reference proteome</keyword>
<keyword id="KW-0678">Repressor</keyword>
<keyword id="KW-0742">SOS response</keyword>
<keyword id="KW-0804">Transcription</keyword>
<keyword id="KW-0805">Transcription regulation</keyword>
<gene>
    <name evidence="1" type="primary">lexA</name>
    <name type="ordered locus">Plav_3178</name>
</gene>